<accession>Q4R5C3</accession>
<keyword id="KW-0963">Cytoplasm</keyword>
<keyword id="KW-0256">Endoplasmic reticulum</keyword>
<keyword id="KW-0931">ER-Golgi transport</keyword>
<keyword id="KW-0333">Golgi apparatus</keyword>
<keyword id="KW-0472">Membrane</keyword>
<keyword id="KW-0539">Nucleus</keyword>
<keyword id="KW-1185">Reference proteome</keyword>
<keyword id="KW-0812">Transmembrane</keyword>
<keyword id="KW-1133">Transmembrane helix</keyword>
<keyword id="KW-0813">Transport</keyword>
<name>ERGI2_MACFA</name>
<reference key="1">
    <citation type="submission" date="2004-03" db="EMBL/GenBank/DDBJ databases">
        <title>DNA sequences of macaque genes expressed in brain or testis and its evolutionary implications.</title>
        <authorList>
            <consortium name="International consortium for macaque cDNA sequencing and analysis"/>
        </authorList>
    </citation>
    <scope>NUCLEOTIDE SEQUENCE [LARGE SCALE MRNA]</scope>
    <source>
        <tissue>Temporal cortex</tissue>
    </source>
</reference>
<comment type="function">
    <text evidence="1">Possible role in transport between endoplasmic reticulum and Golgi.</text>
</comment>
<comment type="subunit">
    <text evidence="2">May form a heteromeric complex composed of ERGIC1, ERGIC2 and ERGIC3 (By similarity). Interacts with ERGIC3, the interaction is required for the stable expression of both proteins (By similarity). May interact with EEF1A1 (By similarity).</text>
</comment>
<comment type="subcellular location">
    <subcellularLocation>
        <location evidence="1">Endoplasmic reticulum-Golgi intermediate compartment membrane</location>
        <topology evidence="1">Multi-pass membrane protein</topology>
    </subcellularLocation>
    <subcellularLocation>
        <location evidence="1">Golgi apparatus</location>
        <location evidence="1">cis-Golgi network membrane</location>
        <topology evidence="1">Multi-pass membrane protein</topology>
    </subcellularLocation>
    <subcellularLocation>
        <location evidence="1">Endoplasmic reticulum membrane</location>
        <topology evidence="1">Multi-pass membrane protein</topology>
    </subcellularLocation>
    <subcellularLocation>
        <location evidence="1">Cytoplasm</location>
    </subcellularLocation>
    <subcellularLocation>
        <location evidence="1">Nucleus</location>
    </subcellularLocation>
    <text>Cycles between the endoplasmic reticulum and the Golgi.</text>
</comment>
<comment type="similarity">
    <text evidence="4">Belongs to the ERGIC family.</text>
</comment>
<dbReference type="EMBL" id="AB169621">
    <property type="protein sequence ID" value="BAE01702.1"/>
    <property type="molecule type" value="mRNA"/>
</dbReference>
<dbReference type="RefSeq" id="NP_001272299.1">
    <property type="nucleotide sequence ID" value="NM_001285370.1"/>
</dbReference>
<dbReference type="SMR" id="Q4R5C3"/>
<dbReference type="STRING" id="9541.ENSMFAP00000028953"/>
<dbReference type="eggNOG" id="KOG2667">
    <property type="taxonomic scope" value="Eukaryota"/>
</dbReference>
<dbReference type="Proteomes" id="UP000233100">
    <property type="component" value="Unplaced"/>
</dbReference>
<dbReference type="GO" id="GO:0030134">
    <property type="term" value="C:COPII-coated ER to Golgi transport vesicle"/>
    <property type="evidence" value="ECO:0007669"/>
    <property type="project" value="TreeGrafter"/>
</dbReference>
<dbReference type="GO" id="GO:0005789">
    <property type="term" value="C:endoplasmic reticulum membrane"/>
    <property type="evidence" value="ECO:0007669"/>
    <property type="project" value="UniProtKB-SubCell"/>
</dbReference>
<dbReference type="GO" id="GO:0033116">
    <property type="term" value="C:endoplasmic reticulum-Golgi intermediate compartment membrane"/>
    <property type="evidence" value="ECO:0007669"/>
    <property type="project" value="UniProtKB-SubCell"/>
</dbReference>
<dbReference type="GO" id="GO:0005794">
    <property type="term" value="C:Golgi apparatus"/>
    <property type="evidence" value="ECO:0007669"/>
    <property type="project" value="UniProtKB-SubCell"/>
</dbReference>
<dbReference type="GO" id="GO:0005634">
    <property type="term" value="C:nucleus"/>
    <property type="evidence" value="ECO:0007669"/>
    <property type="project" value="UniProtKB-SubCell"/>
</dbReference>
<dbReference type="GO" id="GO:0006888">
    <property type="term" value="P:endoplasmic reticulum to Golgi vesicle-mediated transport"/>
    <property type="evidence" value="ECO:0007669"/>
    <property type="project" value="TreeGrafter"/>
</dbReference>
<dbReference type="GO" id="GO:0006890">
    <property type="term" value="P:retrograde vesicle-mediated transport, Golgi to endoplasmic reticulum"/>
    <property type="evidence" value="ECO:0007669"/>
    <property type="project" value="TreeGrafter"/>
</dbReference>
<dbReference type="InterPro" id="IPR045888">
    <property type="entry name" value="Erv"/>
</dbReference>
<dbReference type="InterPro" id="IPR012936">
    <property type="entry name" value="Erv_C"/>
</dbReference>
<dbReference type="InterPro" id="IPR039542">
    <property type="entry name" value="Erv_N"/>
</dbReference>
<dbReference type="PANTHER" id="PTHR10984">
    <property type="entry name" value="ENDOPLASMIC RETICULUM-GOLGI INTERMEDIATE COMPARTMENT PROTEIN"/>
    <property type="match status" value="1"/>
</dbReference>
<dbReference type="PANTHER" id="PTHR10984:SF30">
    <property type="entry name" value="ENDOPLASMIC RETICULUM-GOLGI INTERMEDIATE COMPARTMENT PROTEIN 2"/>
    <property type="match status" value="1"/>
</dbReference>
<dbReference type="Pfam" id="PF07970">
    <property type="entry name" value="COPIIcoated_ERV"/>
    <property type="match status" value="1"/>
</dbReference>
<dbReference type="Pfam" id="PF13850">
    <property type="entry name" value="ERGIC_N"/>
    <property type="match status" value="1"/>
</dbReference>
<protein>
    <recommendedName>
        <fullName>Endoplasmic reticulum-Golgi intermediate compartment protein 2</fullName>
    </recommendedName>
</protein>
<feature type="chain" id="PRO_0000239383" description="Endoplasmic reticulum-Golgi intermediate compartment protein 2">
    <location>
        <begin position="1"/>
        <end position="377"/>
    </location>
</feature>
<feature type="topological domain" description="Cytoplasmic" evidence="3">
    <location>
        <begin position="1"/>
        <end position="33"/>
    </location>
</feature>
<feature type="transmembrane region" description="Helical" evidence="3">
    <location>
        <begin position="34"/>
        <end position="54"/>
    </location>
</feature>
<feature type="topological domain" description="Lumenal" evidence="3">
    <location>
        <begin position="55"/>
        <end position="319"/>
    </location>
</feature>
<feature type="transmembrane region" description="Helical" evidence="3">
    <location>
        <begin position="320"/>
        <end position="340"/>
    </location>
</feature>
<feature type="topological domain" description="Cytoplasmic" evidence="3">
    <location>
        <begin position="341"/>
        <end position="377"/>
    </location>
</feature>
<sequence>MRRLNRKKTLSLVKELDAFPKVPESYVETSASGGTVSLIAFTTMALLTIMEFSVYQDTWMKYEYEVDKDFSSKLRINIDITVAMKCQYVGADVLDLAETMVASADGLVYEPAVFDLSPQQKEWQRMLQLTQSRLQEEHSLQDVIFKSAFKSASTALPPREDDSSQSPDACRIHGHLYVNKVAGNFHITVGKAIPHPRGHAHLAALVNHESYNFSHRIDHLSFGELVPAIINPLDGTEKIAIDHNQMFQYFITVVPTKLHTYKISADTHQFSVTERERIINHAAGSHGVSGIFMKYDLSSLMVTVTEEHMPFWQFFVRLCGIVGGIFSTTGMLHGIGKFIVEIICCRFRLGSYKPVNSVPFEDGHTDNHLPLLENNTH</sequence>
<evidence type="ECO:0000250" key="1"/>
<evidence type="ECO:0000250" key="2">
    <source>
        <dbReference type="UniProtKB" id="Q96RQ1"/>
    </source>
</evidence>
<evidence type="ECO:0000255" key="3"/>
<evidence type="ECO:0000305" key="4"/>
<gene>
    <name type="primary">ERGIC2</name>
    <name type="ORF">QtrA-11873</name>
</gene>
<proteinExistence type="evidence at transcript level"/>
<organism>
    <name type="scientific">Macaca fascicularis</name>
    <name type="common">Crab-eating macaque</name>
    <name type="synonym">Cynomolgus monkey</name>
    <dbReference type="NCBI Taxonomy" id="9541"/>
    <lineage>
        <taxon>Eukaryota</taxon>
        <taxon>Metazoa</taxon>
        <taxon>Chordata</taxon>
        <taxon>Craniata</taxon>
        <taxon>Vertebrata</taxon>
        <taxon>Euteleostomi</taxon>
        <taxon>Mammalia</taxon>
        <taxon>Eutheria</taxon>
        <taxon>Euarchontoglires</taxon>
        <taxon>Primates</taxon>
        <taxon>Haplorrhini</taxon>
        <taxon>Catarrhini</taxon>
        <taxon>Cercopithecidae</taxon>
        <taxon>Cercopithecinae</taxon>
        <taxon>Macaca</taxon>
    </lineage>
</organism>